<proteinExistence type="evidence at transcript level"/>
<evidence type="ECO:0000250" key="1"/>
<evidence type="ECO:0000305" key="2"/>
<protein>
    <recommendedName>
        <fullName>Deoxyhypusine synthase</fullName>
        <shortName>DHS</shortName>
        <ecNumber>2.5.1.46</ecNumber>
    </recommendedName>
</protein>
<comment type="function">
    <text>Catalyzes the NAD-dependent oxidative cleavage of spermidine and the subsequent transfer of the butylamine moiety of spermidine to the epsilon-amino group of a specific lysine residue of the eIF-5A precursor protein to form the intermediate deoxyhypusine residue. Also able to produce homospermidine from putrescine.</text>
</comment>
<comment type="catalytic activity">
    <reaction>
        <text>[eIF5A protein]-L-lysine + spermidine = [eIF5A protein]-deoxyhypusine + propane-1,3-diamine</text>
        <dbReference type="Rhea" id="RHEA:33299"/>
        <dbReference type="Rhea" id="RHEA-COMP:10143"/>
        <dbReference type="Rhea" id="RHEA-COMP:10144"/>
        <dbReference type="ChEBI" id="CHEBI:29969"/>
        <dbReference type="ChEBI" id="CHEBI:57484"/>
        <dbReference type="ChEBI" id="CHEBI:57834"/>
        <dbReference type="ChEBI" id="CHEBI:82657"/>
        <dbReference type="EC" id="2.5.1.46"/>
    </reaction>
</comment>
<comment type="cofactor">
    <cofactor>
        <name>NAD(+)</name>
        <dbReference type="ChEBI" id="CHEBI:57540"/>
    </cofactor>
</comment>
<comment type="pathway">
    <text>Protein modification; eIF5A hypusination.</text>
</comment>
<comment type="tissue specificity">
    <text>Expressed in shoot tips.</text>
</comment>
<comment type="similarity">
    <text evidence="2">Belongs to the deoxyhypusine synthase family.</text>
</comment>
<name>DHYS_SENVE</name>
<sequence length="371" mass="41387">MEESMKQASVMENLRSVVFKESESLEGTCAKIRGYDFNNGIDYSQILKSMVSTGFQASNLGDAIETVNQMLDWRLSHEQVTEDCSQEEKNPTYRESIKCKIFLGFTSNLISSGVRDIIRYLVQHHMVDVIVTTTGGIEEDLIKCLADTFKGEFSLPGAELRSKGLNRIGNLLVPNDNYCKFEDWIIPIFDQMLEEQKAKNVLWTPSKLIMRLGKEINNESSYLYWAYKNDIPVFCPGLTDGSLGDMLYFHTFRNPGLIVDVVQDIRAINSEAVHANPRKTGMIILGGGLPKHHICNANMMRNGADYAVFINTAQEFDGSDSGARPDEAVSWGKIRGSAKSVKVHCDATIAFPLLVAETFAAKREQSAEPSS</sequence>
<organism>
    <name type="scientific">Senecio vernalis</name>
    <name type="common">Spring groundsel</name>
    <dbReference type="NCBI Taxonomy" id="93496"/>
    <lineage>
        <taxon>Eukaryota</taxon>
        <taxon>Viridiplantae</taxon>
        <taxon>Streptophyta</taxon>
        <taxon>Embryophyta</taxon>
        <taxon>Tracheophyta</taxon>
        <taxon>Spermatophyta</taxon>
        <taxon>Magnoliopsida</taxon>
        <taxon>eudicotyledons</taxon>
        <taxon>Gunneridae</taxon>
        <taxon>Pentapetalae</taxon>
        <taxon>asterids</taxon>
        <taxon>campanulids</taxon>
        <taxon>Asterales</taxon>
        <taxon>Asteraceae</taxon>
        <taxon>Asteroideae</taxon>
        <taxon>Senecioneae</taxon>
        <taxon>Senecioninae</taxon>
        <taxon>Senecio</taxon>
    </lineage>
</organism>
<dbReference type="EC" id="2.5.1.46"/>
<dbReference type="EMBL" id="AJ238622">
    <property type="protein sequence ID" value="CAB65461.1"/>
    <property type="molecule type" value="mRNA"/>
</dbReference>
<dbReference type="SMR" id="Q9SC14"/>
<dbReference type="KEGG" id="ag:CAB65461"/>
<dbReference type="BRENDA" id="2.5.1.46">
    <property type="organism ID" value="5675"/>
</dbReference>
<dbReference type="SABIO-RK" id="Q9SC14"/>
<dbReference type="UniPathway" id="UPA00354"/>
<dbReference type="GO" id="GO:0005737">
    <property type="term" value="C:cytoplasm"/>
    <property type="evidence" value="ECO:0007669"/>
    <property type="project" value="TreeGrafter"/>
</dbReference>
<dbReference type="GO" id="GO:0034038">
    <property type="term" value="F:deoxyhypusine synthase activity"/>
    <property type="evidence" value="ECO:0007669"/>
    <property type="project" value="UniProtKB-EC"/>
</dbReference>
<dbReference type="FunFam" id="3.40.910.10:FF:000002">
    <property type="entry name" value="Deoxyhypusine synthase"/>
    <property type="match status" value="1"/>
</dbReference>
<dbReference type="Gene3D" id="3.40.910.10">
    <property type="entry name" value="Deoxyhypusine synthase"/>
    <property type="match status" value="1"/>
</dbReference>
<dbReference type="InterPro" id="IPR002773">
    <property type="entry name" value="Deoxyhypusine_synthase"/>
</dbReference>
<dbReference type="InterPro" id="IPR036982">
    <property type="entry name" value="Deoxyhypusine_synthase_sf"/>
</dbReference>
<dbReference type="InterPro" id="IPR029035">
    <property type="entry name" value="DHS-like_NAD/FAD-binding_dom"/>
</dbReference>
<dbReference type="NCBIfam" id="TIGR00321">
    <property type="entry name" value="dhys"/>
    <property type="match status" value="1"/>
</dbReference>
<dbReference type="PANTHER" id="PTHR11703">
    <property type="entry name" value="DEOXYHYPUSINE SYNTHASE"/>
    <property type="match status" value="1"/>
</dbReference>
<dbReference type="PANTHER" id="PTHR11703:SF0">
    <property type="entry name" value="DEOXYHYPUSINE SYNTHASE"/>
    <property type="match status" value="1"/>
</dbReference>
<dbReference type="Pfam" id="PF01916">
    <property type="entry name" value="DS"/>
    <property type="match status" value="1"/>
</dbReference>
<dbReference type="SUPFAM" id="SSF52467">
    <property type="entry name" value="DHS-like NAD/FAD-binding domain"/>
    <property type="match status" value="1"/>
</dbReference>
<accession>Q9SC14</accession>
<gene>
    <name type="primary">DHS1</name>
</gene>
<reference key="1">
    <citation type="journal article" date="1999" name="Proc. Natl. Acad. Sci. U.S.A.">
        <title>Homospermidine synthase, the first pathway-specific enzyme of pyrrolizidine alkaloid biosynthesis, evolved from deoxyhypusine synthase.</title>
        <authorList>
            <person name="Ober D."/>
            <person name="Hartmann T."/>
        </authorList>
    </citation>
    <scope>NUCLEOTIDE SEQUENCE [MRNA]</scope>
</reference>
<feature type="chain" id="PRO_0000134478" description="Deoxyhypusine synthase">
    <location>
        <begin position="1"/>
        <end position="371"/>
    </location>
</feature>
<feature type="active site" description="Nucleophile" evidence="1">
    <location>
        <position position="333"/>
    </location>
</feature>
<feature type="binding site" evidence="1">
    <location>
        <begin position="107"/>
        <end position="111"/>
    </location>
    <ligand>
        <name>NAD(+)</name>
        <dbReference type="ChEBI" id="CHEBI:57540"/>
    </ligand>
</feature>
<feature type="binding site" evidence="1">
    <location>
        <begin position="133"/>
        <end position="135"/>
    </location>
    <ligand>
        <name>NAD(+)</name>
        <dbReference type="ChEBI" id="CHEBI:57540"/>
    </ligand>
</feature>
<feature type="binding site" evidence="1">
    <location>
        <begin position="138"/>
        <end position="139"/>
    </location>
    <ligand>
        <name>spermidine</name>
        <dbReference type="ChEBI" id="CHEBI:57834"/>
    </ligand>
</feature>
<feature type="binding site" evidence="1">
    <location>
        <position position="139"/>
    </location>
    <ligand>
        <name>NAD(+)</name>
        <dbReference type="ChEBI" id="CHEBI:57540"/>
    </ligand>
</feature>
<feature type="binding site" evidence="1">
    <location>
        <position position="240"/>
    </location>
    <ligand>
        <name>NAD(+)</name>
        <dbReference type="ChEBI" id="CHEBI:57540"/>
    </ligand>
</feature>
<feature type="binding site" evidence="1">
    <location>
        <position position="245"/>
    </location>
    <ligand>
        <name>spermidine</name>
        <dbReference type="ChEBI" id="CHEBI:57834"/>
    </ligand>
</feature>
<feature type="binding site" evidence="1">
    <location>
        <position position="287"/>
    </location>
    <ligand>
        <name>NAD(+)</name>
        <dbReference type="ChEBI" id="CHEBI:57540"/>
    </ligand>
</feature>
<feature type="binding site" evidence="1">
    <location>
        <position position="292"/>
    </location>
    <ligand>
        <name>spermidine</name>
        <dbReference type="ChEBI" id="CHEBI:57834"/>
    </ligand>
</feature>
<feature type="binding site" evidence="1">
    <location>
        <begin position="312"/>
        <end position="313"/>
    </location>
    <ligand>
        <name>NAD(+)</name>
        <dbReference type="ChEBI" id="CHEBI:57540"/>
    </ligand>
</feature>
<feature type="binding site" evidence="1">
    <location>
        <begin position="318"/>
        <end position="320"/>
    </location>
    <ligand>
        <name>spermidine</name>
        <dbReference type="ChEBI" id="CHEBI:57834"/>
    </ligand>
</feature>
<feature type="binding site" evidence="1">
    <location>
        <begin position="327"/>
        <end position="333"/>
    </location>
    <ligand>
        <name>spermidine</name>
        <dbReference type="ChEBI" id="CHEBI:57834"/>
    </ligand>
</feature>
<feature type="binding site" evidence="1">
    <location>
        <begin position="346"/>
        <end position="347"/>
    </location>
    <ligand>
        <name>NAD(+)</name>
        <dbReference type="ChEBI" id="CHEBI:57540"/>
    </ligand>
</feature>
<keyword id="KW-0386">Hypusine biosynthesis</keyword>
<keyword id="KW-0520">NAD</keyword>
<keyword id="KW-0808">Transferase</keyword>